<dbReference type="EMBL" id="AB107249">
    <property type="protein sequence ID" value="BAC98352.1"/>
    <property type="molecule type" value="mRNA"/>
</dbReference>
<dbReference type="EMBL" id="AL163852">
    <property type="protein sequence ID" value="CAB87861.1"/>
    <property type="status" value="ALT_SEQ"/>
    <property type="molecule type" value="Genomic_DNA"/>
</dbReference>
<dbReference type="EMBL" id="CP002686">
    <property type="protein sequence ID" value="AEE80027.1"/>
    <property type="molecule type" value="Genomic_DNA"/>
</dbReference>
<dbReference type="EMBL" id="CP002686">
    <property type="protein sequence ID" value="AEE80028.1"/>
    <property type="molecule type" value="Genomic_DNA"/>
</dbReference>
<dbReference type="EMBL" id="AK226781">
    <property type="protein sequence ID" value="BAE98879.1"/>
    <property type="molecule type" value="mRNA"/>
</dbReference>
<dbReference type="EMBL" id="AF263518">
    <property type="protein sequence ID" value="AAF73054.1"/>
    <property type="status" value="ALT_SEQ"/>
    <property type="molecule type" value="Genomic_DNA"/>
</dbReference>
<dbReference type="EMBL" id="AF263834">
    <property type="protein sequence ID" value="AAF73056.1"/>
    <property type="molecule type" value="mRNA"/>
</dbReference>
<dbReference type="PIR" id="T49219">
    <property type="entry name" value="T49219"/>
</dbReference>
<dbReference type="RefSeq" id="NP_001078318.1">
    <molecule id="Q76E23-2"/>
    <property type="nucleotide sequence ID" value="NM_001084849.2"/>
</dbReference>
<dbReference type="RefSeq" id="NP_001078319.1">
    <molecule id="Q76E23-1"/>
    <property type="nucleotide sequence ID" value="NM_001084850.1"/>
</dbReference>
<dbReference type="SMR" id="Q76E23"/>
<dbReference type="BioGRID" id="10508">
    <property type="interactions" value="3"/>
</dbReference>
<dbReference type="FunCoup" id="Q76E23">
    <property type="interactions" value="3171"/>
</dbReference>
<dbReference type="STRING" id="3702.Q76E23"/>
<dbReference type="GlyGen" id="Q76E23">
    <property type="glycosylation" value="2 sites, 1 O-linked glycan (1 site)"/>
</dbReference>
<dbReference type="iPTMnet" id="Q76E23"/>
<dbReference type="PaxDb" id="3702-AT3G60240.4"/>
<dbReference type="ProteomicsDB" id="232203">
    <molecule id="Q76E23-1"/>
</dbReference>
<dbReference type="EnsemblPlants" id="AT3G60240.3">
    <molecule id="Q76E23-2"/>
    <property type="protein sequence ID" value="AT3G60240.3"/>
    <property type="gene ID" value="AT3G60240"/>
</dbReference>
<dbReference type="EnsemblPlants" id="AT3G60240.4">
    <molecule id="Q76E23-1"/>
    <property type="protein sequence ID" value="AT3G60240.4"/>
    <property type="gene ID" value="AT3G60240"/>
</dbReference>
<dbReference type="GeneID" id="825194"/>
<dbReference type="Gramene" id="AT3G60240.3">
    <molecule id="Q76E23-2"/>
    <property type="protein sequence ID" value="AT3G60240.3"/>
    <property type="gene ID" value="AT3G60240"/>
</dbReference>
<dbReference type="Gramene" id="AT3G60240.4">
    <molecule id="Q76E23-1"/>
    <property type="protein sequence ID" value="AT3G60240.4"/>
    <property type="gene ID" value="AT3G60240"/>
</dbReference>
<dbReference type="KEGG" id="ath:AT3G60240"/>
<dbReference type="Araport" id="AT3G60240"/>
<dbReference type="TAIR" id="AT3G60240">
    <property type="gene designation" value="EIF4G"/>
</dbReference>
<dbReference type="eggNOG" id="KOG0401">
    <property type="taxonomic scope" value="Eukaryota"/>
</dbReference>
<dbReference type="InParanoid" id="Q76E23"/>
<dbReference type="OMA" id="ANFCFYL"/>
<dbReference type="PhylomeDB" id="Q76E23"/>
<dbReference type="CD-CODE" id="4299E36E">
    <property type="entry name" value="Nucleolus"/>
</dbReference>
<dbReference type="CD-CODE" id="60F64496">
    <property type="entry name" value="P-body"/>
</dbReference>
<dbReference type="PRO" id="PR:Q76E23"/>
<dbReference type="Proteomes" id="UP000006548">
    <property type="component" value="Chromosome 3"/>
</dbReference>
<dbReference type="ExpressionAtlas" id="Q76E23">
    <property type="expression patterns" value="baseline and differential"/>
</dbReference>
<dbReference type="GO" id="GO:0003729">
    <property type="term" value="F:mRNA binding"/>
    <property type="evidence" value="ECO:0000314"/>
    <property type="project" value="TAIR"/>
</dbReference>
<dbReference type="GO" id="GO:0003743">
    <property type="term" value="F:translation initiation factor activity"/>
    <property type="evidence" value="ECO:0007669"/>
    <property type="project" value="UniProtKB-KW"/>
</dbReference>
<dbReference type="GO" id="GO:0006417">
    <property type="term" value="P:regulation of translation"/>
    <property type="evidence" value="ECO:0007669"/>
    <property type="project" value="UniProtKB-KW"/>
</dbReference>
<dbReference type="GO" id="GO:0009615">
    <property type="term" value="P:response to virus"/>
    <property type="evidence" value="ECO:0000315"/>
    <property type="project" value="TAIR"/>
</dbReference>
<dbReference type="FunFam" id="1.25.40.180:FF:000024">
    <property type="entry name" value="Eukaryotic translation initiation factor 4G"/>
    <property type="match status" value="1"/>
</dbReference>
<dbReference type="FunFam" id="1.25.40.180:FF:000034">
    <property type="entry name" value="Eukaryotic translation initiation factor 4G"/>
    <property type="match status" value="1"/>
</dbReference>
<dbReference type="Gene3D" id="1.25.40.180">
    <property type="match status" value="2"/>
</dbReference>
<dbReference type="InterPro" id="IPR016024">
    <property type="entry name" value="ARM-type_fold"/>
</dbReference>
<dbReference type="InterPro" id="IPR003891">
    <property type="entry name" value="Initiation_fac_eIF4g_MI"/>
</dbReference>
<dbReference type="InterPro" id="IPR003890">
    <property type="entry name" value="MIF4G-like_typ-3"/>
</dbReference>
<dbReference type="PANTHER" id="PTHR23253">
    <property type="entry name" value="EUKARYOTIC TRANSLATION INITIATION FACTOR 4 GAMMA"/>
    <property type="match status" value="1"/>
</dbReference>
<dbReference type="PANTHER" id="PTHR23253:SF9">
    <property type="entry name" value="EUKARYOTIC TRANSLATION INITIATION FACTOR 4 GAMMA 2"/>
    <property type="match status" value="1"/>
</dbReference>
<dbReference type="Pfam" id="PF02847">
    <property type="entry name" value="MA3"/>
    <property type="match status" value="1"/>
</dbReference>
<dbReference type="Pfam" id="PF02854">
    <property type="entry name" value="MIF4G"/>
    <property type="match status" value="1"/>
</dbReference>
<dbReference type="SMART" id="SM00544">
    <property type="entry name" value="MA3"/>
    <property type="match status" value="1"/>
</dbReference>
<dbReference type="SMART" id="SM00543">
    <property type="entry name" value="MIF4G"/>
    <property type="match status" value="1"/>
</dbReference>
<dbReference type="SUPFAM" id="SSF48371">
    <property type="entry name" value="ARM repeat"/>
    <property type="match status" value="2"/>
</dbReference>
<dbReference type="SUPFAM" id="SSF81995">
    <property type="entry name" value="beta-sandwich domain of Sec23/24"/>
    <property type="match status" value="1"/>
</dbReference>
<dbReference type="PROSITE" id="PS51366">
    <property type="entry name" value="MI"/>
    <property type="match status" value="1"/>
</dbReference>
<name>IF4G_ARATH</name>
<comment type="function">
    <text evidence="4 6">Component of the protein complex eIF4F, which is involved in the recognition of the mRNA cap, ATP-dependent unwinding of 5'-terminal secondary structure and recruitment of mRNA to the ribosome. Plays a role in the accumulation of some potyvirus during viral infection. Required for the accumulation of cucumber mosaic virus 3a protein and turnip crinkle virus p28 replication protein during viral infection. These proteins are necessary for cell-to-cell movement of the virus.</text>
</comment>
<comment type="subunit">
    <text evidence="5">EIF4F is a multi-subunit complex, the composition of which varies with external and internal environmental conditions. It is composed of at least EIF4A, EIF4E and EIF4G. In higher plants two isoforms of EIF4F have been identified, named isoform EIF4F and isoform EIF(iso)4F. Isoform EIF4F has subunits p220 and p26, whereas isoform EIF(iso)4F has subunits p82 and p28.</text>
</comment>
<comment type="alternative products">
    <event type="alternative splicing"/>
    <isoform>
        <id>Q76E23-1</id>
        <name>1</name>
        <sequence type="displayed"/>
    </isoform>
    <isoform>
        <id>Q76E23-2</id>
        <name>2</name>
        <sequence type="described" ref="VSP_040521"/>
    </isoform>
</comment>
<comment type="disruption phenotype">
    <text evidence="6">Displays resistance to potyvirus (C1YVV) infection.</text>
</comment>
<comment type="miscellaneous">
    <molecule>Isoform 2</molecule>
    <text evidence="8">May be due to a competing acceptor splice site.</text>
</comment>
<comment type="similarity">
    <text evidence="8">Belongs to the eukaryotic initiation factor 4G family.</text>
</comment>
<comment type="sequence caution" evidence="8">
    <conflict type="erroneous gene model prediction">
        <sequence resource="EMBL-CDS" id="AAF73054"/>
    </conflict>
</comment>
<comment type="sequence caution" evidence="8">
    <conflict type="erroneous gene model prediction">
        <sequence resource="EMBL-CDS" id="CAB87861"/>
    </conflict>
    <text>The predicted gene At3g60240 has been split into 2 genes: At3g60240 and At3g60245.</text>
</comment>
<organism>
    <name type="scientific">Arabidopsis thaliana</name>
    <name type="common">Mouse-ear cress</name>
    <dbReference type="NCBI Taxonomy" id="3702"/>
    <lineage>
        <taxon>Eukaryota</taxon>
        <taxon>Viridiplantae</taxon>
        <taxon>Streptophyta</taxon>
        <taxon>Embryophyta</taxon>
        <taxon>Tracheophyta</taxon>
        <taxon>Spermatophyta</taxon>
        <taxon>Magnoliopsida</taxon>
        <taxon>eudicotyledons</taxon>
        <taxon>Gunneridae</taxon>
        <taxon>Pentapetalae</taxon>
        <taxon>rosids</taxon>
        <taxon>malvids</taxon>
        <taxon>Brassicales</taxon>
        <taxon>Brassicaceae</taxon>
        <taxon>Camelineae</taxon>
        <taxon>Arabidopsis</taxon>
    </lineage>
</organism>
<sequence length="1727" mass="187921">MSYNQSRPDRSETQYRRTGRSTGNQQQQQQHRSSSAAGYGKGAGAPGSAPAPSTYPDNSSLSSNRSFKKPGNAQGGGQPRVNLPPVNHPNNHNNGPNAHSRSQVTGEPGVGGPTNPTESFNRNTGPIPKAPTSQSTVMSSKINETPNTAKVAASGDASQAFPLQFGSLGPDLMVPARTTSAPPNMDDQKRAQMQQSSLRTASNVPASVPKKDSSNKGADNQLMRKEGHNPSSEKADIQVPHIAPPSQTQKSPITNIRMPSVQTPYQHTQVPHPVHFGGPNMHMQTPVTATSFQMPMPMALSMGNTPQIPPQVFYQGHPPHPMHHQGMMHQAQGHGFATPMGAQIHPQLGHVGVGLSPQYPQQQGGKYGGARKTTPVKITHPDTHEELRLDRRGDPYSEGDSTALKPHSNPPPRSQPVSSFAPRPVNLVQPSYNSNTMIYPPVSVPLNNGPMSSAQAPRYHYPVIDGSQRVQLINQPAHTAPQLIRPAAPAHLSSDSTSSVKARNAQNVMSSALPVNAKVSVKPAGVSEKLGSPKDRSHGEVNISLSQKNVEACSLSSSQQPKPSFVSGVPNSSAPPAKSPVETVPLAKSSVETVPPVKSSVETAPVTTTEIRRAEMVSESISVEDQTCKVEPPHNLTENRGQTMPDSLVSDPETATVAAKENLSLPATNGFRKQLLKVSTTSDAPTSDSVDTSIDKSTEGSSHASSEISGSSPQEKDLKCDNRTASDKLDERSVISDAKHETLSGVLEKAQNEVDGATDVCPVSEKLAVTDDTSSDLPHSTHVLSSTVPLGHSETHKSAVETNTRRNTSTKGKKKIKEILQKADAAGTTSDLYMAYKGPEEKKESSNVVHDVSNQNLLPAIPQAVEAIVDTEPVKNEPEDWEDAADVSTPKLETADNSVNAKRGSSDEVSDNCINTEKKYSRDFLLKFADLCTALPEGFDVSPDIANALIVAYMGASHHEHDSYPTPGKVMDRQASGARLDRRPSNVAGDDRWTKNQGSLPAGYGGNVGFRPGQGGNSGVLRNPRMQGPIISRPMQPVGPMGGMGRNTPDLERWQRGSNFQQKGLFPSPHTPMQVMHKAERKYQVGTIADEEQAKQRQLKSILNKLTPQNFEKLFEQVKSVNIDNAVTLSGVISQIFDKALMEPTFCEMYADFCFHLSGALPDFNENGEKITFKRLLLNKCQEEFERGEKEEEEASRVAEEGQVEQTEEEREEKRLQVRRRMLGNIRLIGELYKKRMLTEKIMHACIQKLLGYNQDPHEENIEALCKLMSTIGVMIDHNKAKFQMDGYFEKMKMLSCKQELSSRVRFMLINAIDLRKNKWQERMKVEGPKKIEEVHRDAAQERQTQANRLSRGPSMNSSGRRGHMEFSSPRGGGGMLSPPAAQMGSYHGPPQGRGFSNQDIRFDDRPSYEPRMVPMPQRSVCEEPITLGPQGGLGQGMSIRRPAVASNTYQSDATQAGGGDSRRPAGGLNGFGSHRPASPVTHGRSSPQERGTAYVHREFASLSRASDLSPEVSSARQVLQGPSATVNSPRENALSEEQLENLSLSAIKEYYSARDENEIGMCMKDMNSPAYHPTMISLWVTDSFERKDKERDLLAKLLVNLVKSADNALNEVQLVKGFESVLKTLEDAVNDAPKAAEFLGRIFGKSVTEKVVTLTEIGRLIQEGGEEPGSLIEFGLGGDVLGSVLEMIKTEAGEETLVEIRRSSGLRIENFKPHAPNRSKILEKFT</sequence>
<gene>
    <name type="primary">EIF4G</name>
    <name type="synonym">CUM2</name>
    <name type="ordered locus">At3g60240</name>
    <name type="ORF">F27H5_30</name>
</gene>
<proteinExistence type="evidence at protein level"/>
<evidence type="ECO:0000250" key="1"/>
<evidence type="ECO:0000255" key="2">
    <source>
        <dbReference type="PROSITE-ProRule" id="PRU00698"/>
    </source>
</evidence>
<evidence type="ECO:0000256" key="3">
    <source>
        <dbReference type="SAM" id="MobiDB-lite"/>
    </source>
</evidence>
<evidence type="ECO:0000269" key="4">
    <source>
    </source>
</evidence>
<evidence type="ECO:0000269" key="5">
    <source>
    </source>
</evidence>
<evidence type="ECO:0000269" key="6">
    <source>
    </source>
</evidence>
<evidence type="ECO:0000303" key="7">
    <source>
    </source>
</evidence>
<evidence type="ECO:0000305" key="8"/>
<evidence type="ECO:0007744" key="9">
    <source>
    </source>
</evidence>
<evidence type="ECO:0007744" key="10">
    <source>
    </source>
</evidence>
<protein>
    <recommendedName>
        <fullName>Eukaryotic translation initiation factor 4G</fullName>
        <shortName>eIF-4G</shortName>
        <shortName>eIF4G</shortName>
    </recommendedName>
    <alternativeName>
        <fullName>Protein cucumovirus multiplication 2</fullName>
    </alternativeName>
    <alternativeName>
        <fullName>Protein synthesis initiation factor 4G</fullName>
    </alternativeName>
</protein>
<keyword id="KW-0025">Alternative splicing</keyword>
<keyword id="KW-0396">Initiation factor</keyword>
<keyword id="KW-0597">Phosphoprotein</keyword>
<keyword id="KW-0648">Protein biosynthesis</keyword>
<keyword id="KW-1185">Reference proteome</keyword>
<keyword id="KW-0810">Translation regulation</keyword>
<reference key="1">
    <citation type="journal article" date="2004" name="J. Virol.">
        <title>The Arabidopsis cucumovirus multiplication 1 and 2 loci encode translation initiation factors 4E and 4G.</title>
        <authorList>
            <person name="Yoshii M."/>
            <person name="Nishikiori M."/>
            <person name="Tomita K."/>
            <person name="Yoshioka N."/>
            <person name="Kozuka R."/>
            <person name="Naito S."/>
            <person name="Ishikawa M."/>
        </authorList>
    </citation>
    <scope>NUCLEOTIDE SEQUENCE [MRNA] (ISOFORM 2)</scope>
    <scope>GENE FAMILY</scope>
    <scope>MUTAGENESIS OF PRO-1329</scope>
    <scope>FUNCTION</scope>
    <source>
        <strain>cv. Columbia</strain>
    </source>
</reference>
<reference key="2">
    <citation type="journal article" date="2000" name="Nature">
        <title>Sequence and analysis of chromosome 3 of the plant Arabidopsis thaliana.</title>
        <authorList>
            <person name="Salanoubat M."/>
            <person name="Lemcke K."/>
            <person name="Rieger M."/>
            <person name="Ansorge W."/>
            <person name="Unseld M."/>
            <person name="Fartmann B."/>
            <person name="Valle G."/>
            <person name="Bloecker H."/>
            <person name="Perez-Alonso M."/>
            <person name="Obermaier B."/>
            <person name="Delseny M."/>
            <person name="Boutry M."/>
            <person name="Grivell L.A."/>
            <person name="Mache R."/>
            <person name="Puigdomenech P."/>
            <person name="De Simone V."/>
            <person name="Choisne N."/>
            <person name="Artiguenave F."/>
            <person name="Robert C."/>
            <person name="Brottier P."/>
            <person name="Wincker P."/>
            <person name="Cattolico L."/>
            <person name="Weissenbach J."/>
            <person name="Saurin W."/>
            <person name="Quetier F."/>
            <person name="Schaefer M."/>
            <person name="Mueller-Auer S."/>
            <person name="Gabel C."/>
            <person name="Fuchs M."/>
            <person name="Benes V."/>
            <person name="Wurmbach E."/>
            <person name="Drzonek H."/>
            <person name="Erfle H."/>
            <person name="Jordan N."/>
            <person name="Bangert S."/>
            <person name="Wiedelmann R."/>
            <person name="Kranz H."/>
            <person name="Voss H."/>
            <person name="Holland R."/>
            <person name="Brandt P."/>
            <person name="Nyakatura G."/>
            <person name="Vezzi A."/>
            <person name="D'Angelo M."/>
            <person name="Pallavicini A."/>
            <person name="Toppo S."/>
            <person name="Simionati B."/>
            <person name="Conrad A."/>
            <person name="Hornischer K."/>
            <person name="Kauer G."/>
            <person name="Loehnert T.-H."/>
            <person name="Nordsiek G."/>
            <person name="Reichelt J."/>
            <person name="Scharfe M."/>
            <person name="Schoen O."/>
            <person name="Bargues M."/>
            <person name="Terol J."/>
            <person name="Climent J."/>
            <person name="Navarro P."/>
            <person name="Collado C."/>
            <person name="Perez-Perez A."/>
            <person name="Ottenwaelder B."/>
            <person name="Duchemin D."/>
            <person name="Cooke R."/>
            <person name="Laudie M."/>
            <person name="Berger-Llauro C."/>
            <person name="Purnelle B."/>
            <person name="Masuy D."/>
            <person name="de Haan M."/>
            <person name="Maarse A.C."/>
            <person name="Alcaraz J.-P."/>
            <person name="Cottet A."/>
            <person name="Casacuberta E."/>
            <person name="Monfort A."/>
            <person name="Argiriou A."/>
            <person name="Flores M."/>
            <person name="Liguori R."/>
            <person name="Vitale D."/>
            <person name="Mannhaupt G."/>
            <person name="Haase D."/>
            <person name="Schoof H."/>
            <person name="Rudd S."/>
            <person name="Zaccaria P."/>
            <person name="Mewes H.-W."/>
            <person name="Mayer K.F.X."/>
            <person name="Kaul S."/>
            <person name="Town C.D."/>
            <person name="Koo H.L."/>
            <person name="Tallon L.J."/>
            <person name="Jenkins J."/>
            <person name="Rooney T."/>
            <person name="Rizzo M."/>
            <person name="Walts A."/>
            <person name="Utterback T."/>
            <person name="Fujii C.Y."/>
            <person name="Shea T.P."/>
            <person name="Creasy T.H."/>
            <person name="Haas B."/>
            <person name="Maiti R."/>
            <person name="Wu D."/>
            <person name="Peterson J."/>
            <person name="Van Aken S."/>
            <person name="Pai G."/>
            <person name="Militscher J."/>
            <person name="Sellers P."/>
            <person name="Gill J.E."/>
            <person name="Feldblyum T.V."/>
            <person name="Preuss D."/>
            <person name="Lin X."/>
            <person name="Nierman W.C."/>
            <person name="Salzberg S.L."/>
            <person name="White O."/>
            <person name="Venter J.C."/>
            <person name="Fraser C.M."/>
            <person name="Kaneko T."/>
            <person name="Nakamura Y."/>
            <person name="Sato S."/>
            <person name="Kato T."/>
            <person name="Asamizu E."/>
            <person name="Sasamoto S."/>
            <person name="Kimura T."/>
            <person name="Idesawa K."/>
            <person name="Kawashima K."/>
            <person name="Kishida Y."/>
            <person name="Kiyokawa C."/>
            <person name="Kohara M."/>
            <person name="Matsumoto M."/>
            <person name="Matsuno A."/>
            <person name="Muraki A."/>
            <person name="Nakayama S."/>
            <person name="Nakazaki N."/>
            <person name="Shinpo S."/>
            <person name="Takeuchi C."/>
            <person name="Wada T."/>
            <person name="Watanabe A."/>
            <person name="Yamada M."/>
            <person name="Yasuda M."/>
            <person name="Tabata S."/>
        </authorList>
    </citation>
    <scope>NUCLEOTIDE SEQUENCE [LARGE SCALE GENOMIC DNA]</scope>
    <source>
        <strain>cv. Columbia</strain>
    </source>
</reference>
<reference key="3">
    <citation type="journal article" date="2017" name="Plant J.">
        <title>Araport11: a complete reannotation of the Arabidopsis thaliana reference genome.</title>
        <authorList>
            <person name="Cheng C.Y."/>
            <person name="Krishnakumar V."/>
            <person name="Chan A.P."/>
            <person name="Thibaud-Nissen F."/>
            <person name="Schobel S."/>
            <person name="Town C.D."/>
        </authorList>
    </citation>
    <scope>GENOME REANNOTATION</scope>
    <source>
        <strain>cv. Columbia</strain>
    </source>
</reference>
<reference key="4">
    <citation type="submission" date="2006-07" db="EMBL/GenBank/DDBJ databases">
        <title>Large-scale analysis of RIKEN Arabidopsis full-length (RAFL) cDNAs.</title>
        <authorList>
            <person name="Totoki Y."/>
            <person name="Seki M."/>
            <person name="Ishida J."/>
            <person name="Nakajima M."/>
            <person name="Enju A."/>
            <person name="Kamiya A."/>
            <person name="Narusaka M."/>
            <person name="Shin-i T."/>
            <person name="Nakagawa M."/>
            <person name="Sakamoto N."/>
            <person name="Oishi K."/>
            <person name="Kohara Y."/>
            <person name="Kobayashi M."/>
            <person name="Toyoda A."/>
            <person name="Sakaki Y."/>
            <person name="Sakurai T."/>
            <person name="Iida K."/>
            <person name="Akiyama K."/>
            <person name="Satou M."/>
            <person name="Toyoda T."/>
            <person name="Konagaya A."/>
            <person name="Carninci P."/>
            <person name="Kawai J."/>
            <person name="Hayashizaki Y."/>
            <person name="Shinozaki K."/>
        </authorList>
    </citation>
    <scope>NUCLEOTIDE SEQUENCE [LARGE SCALE MRNA] (ISOFORM 1)</scope>
    <source>
        <strain>cv. Columbia</strain>
    </source>
</reference>
<reference key="5">
    <citation type="submission" date="2000-05" db="EMBL/GenBank/DDBJ databases">
        <title>The sequence of Arabidopsis thaliana EIF4G.</title>
        <authorList>
            <person name="Browning K.S."/>
            <person name="Wong K."/>
        </authorList>
    </citation>
    <scope>NUCLEOTIDE SEQUENCE [GENOMIC DNA / MRNA] OF 66-1727</scope>
</reference>
<reference key="6">
    <citation type="journal article" date="1998" name="J. Virol.">
        <title>Isolation of an Arabidopsis thaliana mutant in which the multiplication of both cucumber mosaic virus and turnip crinkle virus is affected.</title>
        <authorList>
            <person name="Yoshii M."/>
            <person name="Yoshioka N."/>
            <person name="Ishikawa M."/>
            <person name="Naito S."/>
        </authorList>
    </citation>
    <scope>MUTANT CUM2-1</scope>
</reference>
<reference key="7">
    <citation type="journal article" date="2003" name="J. Virol.">
        <authorList>
            <person name="Yoshii M."/>
            <person name="Yoshioka N."/>
            <person name="Ishikawa M."/>
            <person name="Naito S."/>
        </authorList>
    </citation>
    <scope>ERRATUM OF PUBMED:9765416</scope>
</reference>
<reference key="8">
    <citation type="journal article" date="2006" name="Trends Plant Sci.">
        <title>Translation initiation factors: a weak link in plant RNA virus infection.</title>
        <authorList>
            <person name="Robaglia C."/>
            <person name="Caranta C."/>
        </authorList>
    </citation>
    <scope>REVIEW</scope>
    <scope>SUBUNIT</scope>
</reference>
<reference key="9">
    <citation type="journal article" date="2007" name="FEBS Lett.">
        <title>Coordinated and selective recruitment of eIF4E and eIF4G factors for potyvirus infection in Arabidopsis thaliana.</title>
        <authorList>
            <person name="Nicaise V."/>
            <person name="Gallois J.L."/>
            <person name="Chafiai F."/>
            <person name="Allen L.M."/>
            <person name="Schurdi-Levraud V."/>
            <person name="Browning K.S."/>
            <person name="Candresse T."/>
            <person name="Caranta C."/>
            <person name="Le Gall O."/>
            <person name="German-Retana S."/>
        </authorList>
    </citation>
    <scope>DISRUPTION PHENOTYPE</scope>
    <scope>FUNCTION</scope>
</reference>
<reference key="10">
    <citation type="journal article" date="2009" name="J. Proteomics">
        <title>Phosphoproteomic analysis of nuclei-enriched fractions from Arabidopsis thaliana.</title>
        <authorList>
            <person name="Jones A.M.E."/>
            <person name="MacLean D."/>
            <person name="Studholme D.J."/>
            <person name="Serna-Sanz A."/>
            <person name="Andreasson E."/>
            <person name="Rathjen J.P."/>
            <person name="Peck S.C."/>
        </authorList>
    </citation>
    <scope>PHOSPHORYLATION [LARGE SCALE ANALYSIS] AT SER-1529</scope>
    <scope>IDENTIFICATION BY MASS SPECTROMETRY [LARGE SCALE ANALYSIS]</scope>
    <source>
        <strain>cv. Columbia</strain>
    </source>
</reference>
<reference key="11">
    <citation type="journal article" date="2009" name="Plant Physiol.">
        <title>Large-scale Arabidopsis phosphoproteome profiling reveals novel chloroplast kinase substrates and phosphorylation networks.</title>
        <authorList>
            <person name="Reiland S."/>
            <person name="Messerli G."/>
            <person name="Baerenfaller K."/>
            <person name="Gerrits B."/>
            <person name="Endler A."/>
            <person name="Grossmann J."/>
            <person name="Gruissem W."/>
            <person name="Baginsky S."/>
        </authorList>
    </citation>
    <scope>PHOSPHORYLATION [LARGE SCALE ANALYSIS] AT SER-985 AND SER-1529</scope>
    <scope>IDENTIFICATION BY MASS SPECTROMETRY [LARGE SCALE ANALYSIS]</scope>
</reference>
<feature type="chain" id="PRO_0000245495" description="Eukaryotic translation initiation factor 4G">
    <location>
        <begin position="1"/>
        <end position="1727"/>
    </location>
</feature>
<feature type="domain" description="MIF4G" evidence="2">
    <location>
        <begin position="1096"/>
        <end position="1319"/>
    </location>
</feature>
<feature type="domain" description="MI" evidence="2">
    <location>
        <begin position="1539"/>
        <end position="1663"/>
    </location>
</feature>
<feature type="region of interest" description="Disordered" evidence="3">
    <location>
        <begin position="1"/>
        <end position="154"/>
    </location>
</feature>
<feature type="region of interest" description="Disordered" evidence="3">
    <location>
        <begin position="172"/>
        <end position="252"/>
    </location>
</feature>
<feature type="region of interest" description="Disordered" evidence="3">
    <location>
        <begin position="360"/>
        <end position="423"/>
    </location>
</feature>
<feature type="region of interest" description="Disordered" evidence="3">
    <location>
        <begin position="552"/>
        <end position="581"/>
    </location>
</feature>
<feature type="region of interest" description="Disordered" evidence="3">
    <location>
        <begin position="678"/>
        <end position="736"/>
    </location>
</feature>
<feature type="region of interest" description="Disordered" evidence="3">
    <location>
        <begin position="784"/>
        <end position="815"/>
    </location>
</feature>
<feature type="region of interest" description="EIF4E-binding" evidence="1">
    <location>
        <begin position="916"/>
        <end position="928"/>
    </location>
</feature>
<feature type="region of interest" description="Disordered" evidence="3">
    <location>
        <begin position="977"/>
        <end position="1007"/>
    </location>
</feature>
<feature type="region of interest" description="Disordered" evidence="3">
    <location>
        <begin position="1188"/>
        <end position="1212"/>
    </location>
</feature>
<feature type="region of interest" description="Disordered" evidence="3">
    <location>
        <begin position="1336"/>
        <end position="1375"/>
    </location>
</feature>
<feature type="region of interest" description="Disordered" evidence="3">
    <location>
        <begin position="1446"/>
        <end position="1492"/>
    </location>
</feature>
<feature type="compositionally biased region" description="Low complexity" evidence="3">
    <location>
        <begin position="25"/>
        <end position="38"/>
    </location>
</feature>
<feature type="compositionally biased region" description="Polar residues" evidence="3">
    <location>
        <begin position="55"/>
        <end position="65"/>
    </location>
</feature>
<feature type="compositionally biased region" description="Low complexity" evidence="3">
    <location>
        <begin position="79"/>
        <end position="97"/>
    </location>
</feature>
<feature type="compositionally biased region" description="Polar residues" evidence="3">
    <location>
        <begin position="114"/>
        <end position="124"/>
    </location>
</feature>
<feature type="compositionally biased region" description="Polar residues" evidence="3">
    <location>
        <begin position="131"/>
        <end position="148"/>
    </location>
</feature>
<feature type="compositionally biased region" description="Polar residues" evidence="3">
    <location>
        <begin position="191"/>
        <end position="205"/>
    </location>
</feature>
<feature type="compositionally biased region" description="Basic and acidic residues" evidence="3">
    <location>
        <begin position="222"/>
        <end position="236"/>
    </location>
</feature>
<feature type="compositionally biased region" description="Basic and acidic residues" evidence="3">
    <location>
        <begin position="379"/>
        <end position="395"/>
    </location>
</feature>
<feature type="compositionally biased region" description="Polar residues" evidence="3">
    <location>
        <begin position="552"/>
        <end position="562"/>
    </location>
</feature>
<feature type="compositionally biased region" description="Polar residues" evidence="3">
    <location>
        <begin position="678"/>
        <end position="692"/>
    </location>
</feature>
<feature type="compositionally biased region" description="Low complexity" evidence="3">
    <location>
        <begin position="699"/>
        <end position="712"/>
    </location>
</feature>
<feature type="compositionally biased region" description="Basic and acidic residues" evidence="3">
    <location>
        <begin position="714"/>
        <end position="736"/>
    </location>
</feature>
<feature type="compositionally biased region" description="Polar residues" evidence="3">
    <location>
        <begin position="800"/>
        <end position="810"/>
    </location>
</feature>
<feature type="compositionally biased region" description="Basic and acidic residues" evidence="3">
    <location>
        <begin position="979"/>
        <end position="994"/>
    </location>
</feature>
<feature type="compositionally biased region" description="Basic and acidic residues" evidence="3">
    <location>
        <begin position="1188"/>
        <end position="1200"/>
    </location>
</feature>
<feature type="compositionally biased region" description="Acidic residues" evidence="3">
    <location>
        <begin position="1202"/>
        <end position="1211"/>
    </location>
</feature>
<feature type="compositionally biased region" description="Polar residues" evidence="3">
    <location>
        <begin position="1342"/>
        <end position="1360"/>
    </location>
</feature>
<feature type="compositionally biased region" description="Polar residues" evidence="3">
    <location>
        <begin position="1446"/>
        <end position="1455"/>
    </location>
</feature>
<feature type="modified residue" description="Phosphoserine" evidence="10">
    <location>
        <position position="985"/>
    </location>
</feature>
<feature type="modified residue" description="Phosphoserine" evidence="9 10">
    <location>
        <position position="1529"/>
    </location>
</feature>
<feature type="splice variant" id="VSP_040521" description="In isoform 2." evidence="7">
    <location>
        <begin position="104"/>
        <end position="105"/>
    </location>
</feature>
<feature type="mutagenesis site" description="In cum2-1; Reduces cucumber mosaic virus (CMV) or turnip crinkle virus (TCV) multiplication after infection." evidence="4">
    <original>P</original>
    <variation>S</variation>
    <location>
        <position position="1329"/>
    </location>
</feature>
<feature type="sequence conflict" description="In Ref. 4; BAE98879." evidence="8" ref="4">
    <original>D</original>
    <variation>G</variation>
    <location>
        <position position="236"/>
    </location>
</feature>
<feature type="sequence conflict" description="In Ref. 5; AAF73054." evidence="8" ref="5">
    <original>T</original>
    <variation>P</variation>
    <location>
        <position position="285"/>
    </location>
</feature>
<accession>Q76E23</accession>
<accession>Q0WVG9</accession>
<accession>Q9LKQ7</accession>
<accession>Q9LY39</accession>
<accession>Q9M4Q5</accession>